<proteinExistence type="inferred from homology"/>
<dbReference type="EC" id="4.2.1.36"/>
<dbReference type="EMBL" id="AY955279">
    <property type="protein sequence ID" value="AAX53108.1"/>
    <property type="molecule type" value="Genomic_DNA"/>
</dbReference>
<dbReference type="EMBL" id="AM270330">
    <property type="protein sequence ID" value="CAK42204.1"/>
    <property type="molecule type" value="Genomic_DNA"/>
</dbReference>
<dbReference type="RefSeq" id="XP_001396574.1">
    <property type="nucleotide sequence ID" value="XM_001396537.2"/>
</dbReference>
<dbReference type="SMR" id="Q58FL6"/>
<dbReference type="EnsemblFungi" id="CAK42204">
    <property type="protein sequence ID" value="CAK42204"/>
    <property type="gene ID" value="An15g00350"/>
</dbReference>
<dbReference type="GeneID" id="4987626"/>
<dbReference type="KEGG" id="ang:An15g00350"/>
<dbReference type="VEuPathDB" id="FungiDB:An15g00350"/>
<dbReference type="HOGENOM" id="CLU_006714_3_1_1"/>
<dbReference type="UniPathway" id="UPA00033">
    <property type="reaction ID" value="UER01027"/>
</dbReference>
<dbReference type="Proteomes" id="UP000006706">
    <property type="component" value="Chromosome 3R"/>
</dbReference>
<dbReference type="GO" id="GO:0005759">
    <property type="term" value="C:mitochondrial matrix"/>
    <property type="evidence" value="ECO:0007669"/>
    <property type="project" value="EnsemblFungi"/>
</dbReference>
<dbReference type="GO" id="GO:0051539">
    <property type="term" value="F:4 iron, 4 sulfur cluster binding"/>
    <property type="evidence" value="ECO:0007669"/>
    <property type="project" value="InterPro"/>
</dbReference>
<dbReference type="GO" id="GO:0004409">
    <property type="term" value="F:homoaconitate hydratase activity"/>
    <property type="evidence" value="ECO:0007669"/>
    <property type="project" value="UniProtKB-EC"/>
</dbReference>
<dbReference type="GO" id="GO:0046872">
    <property type="term" value="F:metal ion binding"/>
    <property type="evidence" value="ECO:0007669"/>
    <property type="project" value="UniProtKB-KW"/>
</dbReference>
<dbReference type="GO" id="GO:0019878">
    <property type="term" value="P:lysine biosynthetic process via aminoadipic acid"/>
    <property type="evidence" value="ECO:0007669"/>
    <property type="project" value="UniProtKB-UniPathway"/>
</dbReference>
<dbReference type="CDD" id="cd01582">
    <property type="entry name" value="Homoaconitase"/>
    <property type="match status" value="1"/>
</dbReference>
<dbReference type="CDD" id="cd01674">
    <property type="entry name" value="Homoaconitase_Swivel"/>
    <property type="match status" value="1"/>
</dbReference>
<dbReference type="FunFam" id="3.30.499.10:FF:000013">
    <property type="entry name" value="Homoaconitase, mitochondrial"/>
    <property type="match status" value="1"/>
</dbReference>
<dbReference type="FunFam" id="3.30.499.10:FF:000016">
    <property type="entry name" value="Homoaconitase, mitochondrial"/>
    <property type="match status" value="1"/>
</dbReference>
<dbReference type="Gene3D" id="3.30.499.10">
    <property type="entry name" value="Aconitase, domain 3"/>
    <property type="match status" value="2"/>
</dbReference>
<dbReference type="Gene3D" id="3.20.19.10">
    <property type="entry name" value="Aconitase, domain 4"/>
    <property type="match status" value="1"/>
</dbReference>
<dbReference type="InterPro" id="IPR015931">
    <property type="entry name" value="Acnase/IPM_dHydase_lsu_aba_1/3"/>
</dbReference>
<dbReference type="InterPro" id="IPR001030">
    <property type="entry name" value="Acoase/IPM_deHydtase_lsu_aba"/>
</dbReference>
<dbReference type="InterPro" id="IPR015928">
    <property type="entry name" value="Aconitase/3IPM_dehydase_swvl"/>
</dbReference>
<dbReference type="InterPro" id="IPR018136">
    <property type="entry name" value="Aconitase_4Fe-4S_BS"/>
</dbReference>
<dbReference type="InterPro" id="IPR036008">
    <property type="entry name" value="Aconitase_4Fe-4S_dom"/>
</dbReference>
<dbReference type="InterPro" id="IPR000573">
    <property type="entry name" value="AconitaseA/IPMdHydase_ssu_swvl"/>
</dbReference>
<dbReference type="InterPro" id="IPR004418">
    <property type="entry name" value="Homoaconitase_mito"/>
</dbReference>
<dbReference type="InterPro" id="IPR039386">
    <property type="entry name" value="Homoaconitase_swivel"/>
</dbReference>
<dbReference type="InterPro" id="IPR050067">
    <property type="entry name" value="IPM_dehydratase_rel_enz"/>
</dbReference>
<dbReference type="NCBIfam" id="TIGR00139">
    <property type="entry name" value="h_aconitase"/>
    <property type="match status" value="1"/>
</dbReference>
<dbReference type="PANTHER" id="PTHR43822:SF2">
    <property type="entry name" value="HOMOACONITASE, MITOCHONDRIAL"/>
    <property type="match status" value="1"/>
</dbReference>
<dbReference type="PANTHER" id="PTHR43822">
    <property type="entry name" value="HOMOACONITASE, MITOCHONDRIAL-RELATED"/>
    <property type="match status" value="1"/>
</dbReference>
<dbReference type="Pfam" id="PF00330">
    <property type="entry name" value="Aconitase"/>
    <property type="match status" value="1"/>
</dbReference>
<dbReference type="Pfam" id="PF00694">
    <property type="entry name" value="Aconitase_C"/>
    <property type="match status" value="1"/>
</dbReference>
<dbReference type="PRINTS" id="PR00415">
    <property type="entry name" value="ACONITASE"/>
</dbReference>
<dbReference type="SUPFAM" id="SSF53732">
    <property type="entry name" value="Aconitase iron-sulfur domain"/>
    <property type="match status" value="1"/>
</dbReference>
<dbReference type="SUPFAM" id="SSF52016">
    <property type="entry name" value="LeuD/IlvD-like"/>
    <property type="match status" value="1"/>
</dbReference>
<dbReference type="PROSITE" id="PS00450">
    <property type="entry name" value="ACONITASE_1"/>
    <property type="match status" value="1"/>
</dbReference>
<evidence type="ECO:0000250" key="1"/>
<evidence type="ECO:0000255" key="2"/>
<evidence type="ECO:0000305" key="3"/>
<sequence length="769" mass="83363">MQSRLLPSGPGRRWISLRVPNTPQRRAFASTRFLFQDVFQSQLDDPSSAALFSSLQSSRAVPQTLTEKIVQKYAVGLPDGKFVKSGDYVTIAPHRIMTHDNSWPVALKFMSIGASKMHDPNQVVMTLDHDVQNKTEKNLQKYRQIEEFAKQHGVEFYPAGRGIGHQIMVEEGFAWPGTLVVASDSHSNTYGAVASVGTPIVRTDAASIWATGKTWWQIPPVAKVTFTGILPPGVTGKDVIVALCGLFDKDDVLNHAIEFTGSEETMRSLPMDSRLTIANMTTEWGALSGLFPMDGVLKGWLKGKATTAAMGLADGPFKTLAARNFTHPAIEQLFVNPLTADKGAKYAKELFLDLSTLSPYVSGPNSVKIATPLKELEAQDIKVDKAYLVSCTNSRASDIAAAAKVFKDAAEKNGGKVPKIADGVKFYIAAASIPEQLAAEGAGDWQTLLEAGATALPAGCGPCIGLGTGLLEPGEVGISASNRNFKGRMGSTEAKAYLGSPEIVAASALSGKLSGPGWYQPPEGWTEVVRGEGDGIREEDRMLNTEQALEKLLGQLDDLVADGEKRFAPEEKVEEEGGLTEVYPGFPERVSGEIVFCDADNLNTDAIYPGYWTYQDNVPVEKMAEVCMSNYDKEFASIAKEGDILVVGYNFGCGSSREQAATALLAKQIPLVVSGSFGNIFSRNSINNALMGLEVPRLVSRLREEFGDKQLTRRTGWTLTWDVRRSQIEIQEGQNGPKWTHKVGELPPNVQEIIAKGGLEKWVKNAIEA</sequence>
<reference key="1">
    <citation type="submission" date="2005-03" db="EMBL/GenBank/DDBJ databases">
        <title>Comparison of the Aspergillus niger genomic DNA sequence with its genetic map.</title>
        <authorList>
            <person name="van de Vondervoort P.J.I."/>
            <person name="Langeveld S.M.J."/>
            <person name="Ram A.F.J."/>
            <person name="Visser J."/>
            <person name="Groot G."/>
            <person name="Pel H."/>
            <person name="van Peij N.N.M.E."/>
        </authorList>
    </citation>
    <scope>NUCLEOTIDE SEQUENCE [GENOMIC DNA]</scope>
</reference>
<reference key="2">
    <citation type="journal article" date="2007" name="Nat. Biotechnol.">
        <title>Genome sequencing and analysis of the versatile cell factory Aspergillus niger CBS 513.88.</title>
        <authorList>
            <person name="Pel H.J."/>
            <person name="de Winde J.H."/>
            <person name="Archer D.B."/>
            <person name="Dyer P.S."/>
            <person name="Hofmann G."/>
            <person name="Schaap P.J."/>
            <person name="Turner G."/>
            <person name="de Vries R.P."/>
            <person name="Albang R."/>
            <person name="Albermann K."/>
            <person name="Andersen M.R."/>
            <person name="Bendtsen J.D."/>
            <person name="Benen J.A.E."/>
            <person name="van den Berg M."/>
            <person name="Breestraat S."/>
            <person name="Caddick M.X."/>
            <person name="Contreras R."/>
            <person name="Cornell M."/>
            <person name="Coutinho P.M."/>
            <person name="Danchin E.G.J."/>
            <person name="Debets A.J.M."/>
            <person name="Dekker P."/>
            <person name="van Dijck P.W.M."/>
            <person name="van Dijk A."/>
            <person name="Dijkhuizen L."/>
            <person name="Driessen A.J.M."/>
            <person name="d'Enfert C."/>
            <person name="Geysens S."/>
            <person name="Goosen C."/>
            <person name="Groot G.S.P."/>
            <person name="de Groot P.W.J."/>
            <person name="Guillemette T."/>
            <person name="Henrissat B."/>
            <person name="Herweijer M."/>
            <person name="van den Hombergh J.P.T.W."/>
            <person name="van den Hondel C.A.M.J.J."/>
            <person name="van der Heijden R.T.J.M."/>
            <person name="van der Kaaij R.M."/>
            <person name="Klis F.M."/>
            <person name="Kools H.J."/>
            <person name="Kubicek C.P."/>
            <person name="van Kuyk P.A."/>
            <person name="Lauber J."/>
            <person name="Lu X."/>
            <person name="van der Maarel M.J.E.C."/>
            <person name="Meulenberg R."/>
            <person name="Menke H."/>
            <person name="Mortimer M.A."/>
            <person name="Nielsen J."/>
            <person name="Oliver S.G."/>
            <person name="Olsthoorn M."/>
            <person name="Pal K."/>
            <person name="van Peij N.N.M.E."/>
            <person name="Ram A.F.J."/>
            <person name="Rinas U."/>
            <person name="Roubos J.A."/>
            <person name="Sagt C.M.J."/>
            <person name="Schmoll M."/>
            <person name="Sun J."/>
            <person name="Ussery D."/>
            <person name="Varga J."/>
            <person name="Vervecken W."/>
            <person name="van de Vondervoort P.J.J."/>
            <person name="Wedler H."/>
            <person name="Woesten H.A.B."/>
            <person name="Zeng A.-P."/>
            <person name="van Ooyen A.J.J."/>
            <person name="Visser J."/>
            <person name="Stam H."/>
        </authorList>
    </citation>
    <scope>NUCLEOTIDE SEQUENCE [LARGE SCALE GENOMIC DNA]</scope>
    <source>
        <strain>ATCC MYA-4892 / CBS 513.88 / FGSC A1513</strain>
    </source>
</reference>
<gene>
    <name type="primary">lysA</name>
    <name type="synonym">lys4</name>
    <name type="ORF">An15g00350</name>
</gene>
<accession>Q58FL6</accession>
<accession>A2R4G6</accession>
<protein>
    <recommendedName>
        <fullName>Homoaconitase, mitochondrial</fullName>
        <ecNumber>4.2.1.36</ecNumber>
    </recommendedName>
    <alternativeName>
        <fullName>Homoaconitate hydratase</fullName>
    </alternativeName>
</protein>
<organism>
    <name type="scientific">Aspergillus niger (strain ATCC MYA-4892 / CBS 513.88 / FGSC A1513)</name>
    <dbReference type="NCBI Taxonomy" id="425011"/>
    <lineage>
        <taxon>Eukaryota</taxon>
        <taxon>Fungi</taxon>
        <taxon>Dikarya</taxon>
        <taxon>Ascomycota</taxon>
        <taxon>Pezizomycotina</taxon>
        <taxon>Eurotiomycetes</taxon>
        <taxon>Eurotiomycetidae</taxon>
        <taxon>Eurotiales</taxon>
        <taxon>Aspergillaceae</taxon>
        <taxon>Aspergillus</taxon>
        <taxon>Aspergillus subgen. Circumdati</taxon>
    </lineage>
</organism>
<keyword id="KW-0028">Amino-acid biosynthesis</keyword>
<keyword id="KW-0408">Iron</keyword>
<keyword id="KW-0411">Iron-sulfur</keyword>
<keyword id="KW-0456">Lyase</keyword>
<keyword id="KW-0457">Lysine biosynthesis</keyword>
<keyword id="KW-0479">Metal-binding</keyword>
<keyword id="KW-0496">Mitochondrion</keyword>
<keyword id="KW-1185">Reference proteome</keyword>
<keyword id="KW-0809">Transit peptide</keyword>
<name>LYS4_ASPNC</name>
<comment type="function">
    <text evidence="1">Catalyzes the reversible hydration of cis-homoaconitate to (2R,3S)-homoisocitrate, a step in the alpha-aminoadipate pathway for lysine biosynthesis.</text>
</comment>
<comment type="catalytic activity">
    <reaction>
        <text>(2R,3S)-homoisocitrate = cis-homoaconitate + H2O</text>
        <dbReference type="Rhea" id="RHEA:15485"/>
        <dbReference type="ChEBI" id="CHEBI:15377"/>
        <dbReference type="ChEBI" id="CHEBI:15404"/>
        <dbReference type="ChEBI" id="CHEBI:58174"/>
        <dbReference type="EC" id="4.2.1.36"/>
    </reaction>
</comment>
<comment type="cofactor">
    <cofactor evidence="1">
        <name>[4Fe-4S] cluster</name>
        <dbReference type="ChEBI" id="CHEBI:49883"/>
    </cofactor>
    <text evidence="1">Binds 1 [4Fe-4S] cluster per subunit.</text>
</comment>
<comment type="pathway">
    <text>Amino-acid biosynthesis; L-lysine biosynthesis via AAA pathway; L-alpha-aminoadipate from 2-oxoglutarate: step 3/5.</text>
</comment>
<comment type="subcellular location">
    <subcellularLocation>
        <location evidence="1">Mitochondrion</location>
    </subcellularLocation>
</comment>
<comment type="similarity">
    <text evidence="3">Belongs to the aconitase/IPM isomerase family.</text>
</comment>
<feature type="transit peptide" description="Mitochondrion" evidence="2">
    <location>
        <begin position="1"/>
        <end position="28"/>
    </location>
</feature>
<feature type="chain" id="PRO_0000247917" description="Homoaconitase, mitochondrial">
    <location>
        <begin position="29"/>
        <end position="769"/>
    </location>
</feature>
<feature type="binding site" evidence="1">
    <location>
        <position position="391"/>
    </location>
    <ligand>
        <name>[4Fe-4S] cluster</name>
        <dbReference type="ChEBI" id="CHEBI:49883"/>
    </ligand>
</feature>
<feature type="binding site" evidence="1">
    <location>
        <position position="460"/>
    </location>
    <ligand>
        <name>[4Fe-4S] cluster</name>
        <dbReference type="ChEBI" id="CHEBI:49883"/>
    </ligand>
</feature>
<feature type="binding site" evidence="1">
    <location>
        <position position="463"/>
    </location>
    <ligand>
        <name>[4Fe-4S] cluster</name>
        <dbReference type="ChEBI" id="CHEBI:49883"/>
    </ligand>
</feature>